<gene>
    <name evidence="17" type="primary">Plce1</name>
    <name type="synonym">Kiaa1516</name>
    <name type="synonym">Plce</name>
</gene>
<feature type="chain" id="PRO_0000256239" description="1-phosphatidylinositol 4,5-bisphosphate phosphodiesterase epsilon-1">
    <location>
        <begin position="1"/>
        <end position="2282"/>
    </location>
</feature>
<feature type="domain" description="Ras-GEF" evidence="6">
    <location>
        <begin position="528"/>
        <end position="781"/>
    </location>
</feature>
<feature type="domain" description="PI-PLC X-box" evidence="7">
    <location>
        <begin position="1373"/>
        <end position="1521"/>
    </location>
</feature>
<feature type="domain" description="PI-PLC Y-box" evidence="8">
    <location>
        <begin position="1710"/>
        <end position="1826"/>
    </location>
</feature>
<feature type="domain" description="C2" evidence="4">
    <location>
        <begin position="1831"/>
        <end position="1956"/>
    </location>
</feature>
<feature type="domain" description="Ras-associating 1" evidence="5">
    <location>
        <begin position="1992"/>
        <end position="2094"/>
    </location>
</feature>
<feature type="domain" description="Ras-associating 2" evidence="5">
    <location>
        <begin position="2115"/>
        <end position="2218"/>
    </location>
</feature>
<feature type="region of interest" description="Disordered" evidence="9">
    <location>
        <begin position="31"/>
        <end position="52"/>
    </location>
</feature>
<feature type="region of interest" description="Disordered" evidence="9">
    <location>
        <begin position="84"/>
        <end position="114"/>
    </location>
</feature>
<feature type="region of interest" description="Disordered" evidence="9">
    <location>
        <begin position="157"/>
        <end position="179"/>
    </location>
</feature>
<feature type="region of interest" description="Disordered" evidence="9">
    <location>
        <begin position="1050"/>
        <end position="1146"/>
    </location>
</feature>
<feature type="region of interest" description="Disordered" evidence="9">
    <location>
        <begin position="1548"/>
        <end position="1572"/>
    </location>
</feature>
<feature type="region of interest" description="Disordered" evidence="9">
    <location>
        <begin position="1663"/>
        <end position="1718"/>
    </location>
</feature>
<feature type="region of interest" description="Required for activation by RHOA, RHOB, GNA12, GNA13 and G-beta gamma" evidence="1">
    <location>
        <begin position="1667"/>
        <end position="1744"/>
    </location>
</feature>
<feature type="region of interest" description="Disordered" evidence="9">
    <location>
        <begin position="2239"/>
        <end position="2282"/>
    </location>
</feature>
<feature type="compositionally biased region" description="Acidic residues" evidence="9">
    <location>
        <begin position="84"/>
        <end position="95"/>
    </location>
</feature>
<feature type="compositionally biased region" description="Polar residues" evidence="9">
    <location>
        <begin position="104"/>
        <end position="114"/>
    </location>
</feature>
<feature type="compositionally biased region" description="Polar residues" evidence="9">
    <location>
        <begin position="1070"/>
        <end position="1080"/>
    </location>
</feature>
<feature type="compositionally biased region" description="Acidic residues" evidence="9">
    <location>
        <begin position="1560"/>
        <end position="1572"/>
    </location>
</feature>
<feature type="compositionally biased region" description="Polar residues" evidence="9">
    <location>
        <begin position="2272"/>
        <end position="2282"/>
    </location>
</feature>
<feature type="active site" evidence="7">
    <location>
        <position position="1388"/>
    </location>
</feature>
<feature type="active site" evidence="7">
    <location>
        <position position="1433"/>
    </location>
</feature>
<feature type="modified residue" description="Phosphoserine" evidence="18">
    <location>
        <position position="1093"/>
    </location>
</feature>
<feature type="sequence conflict" description="In Ref. 1; BAC00906 and 3; AAI38350/AAI38351." evidence="16" ref="1 3">
    <original>N</original>
    <variation>S</variation>
    <location>
        <position position="295"/>
    </location>
</feature>
<feature type="sequence conflict" description="In Ref. 6; AAF40208." evidence="16" ref="6">
    <original>T</original>
    <variation>A</variation>
    <location>
        <position position="1798"/>
    </location>
</feature>
<feature type="sequence conflict" description="In Ref. 6; AAF40208." evidence="16" ref="6">
    <original>S</original>
    <variation>N</variation>
    <location>
        <position position="1829"/>
    </location>
</feature>
<feature type="sequence conflict" description="In Ref. 5; BAC29099." evidence="16" ref="5">
    <original>LKE</original>
    <variation>VKD</variation>
    <location>
        <begin position="2215"/>
        <end position="2217"/>
    </location>
</feature>
<feature type="sequence conflict" description="In Ref. 5; BAC29099." evidence="16" ref="5">
    <original>A</original>
    <variation>G</variation>
    <location>
        <position position="2233"/>
    </location>
</feature>
<feature type="sequence conflict" description="In Ref. 5; BAC29099." evidence="16" ref="5">
    <original>L</original>
    <variation>V</variation>
    <location>
        <position position="2236"/>
    </location>
</feature>
<feature type="sequence conflict" description="In Ref. 5; BAC29099." evidence="16" ref="5">
    <original>L</original>
    <variation>V</variation>
    <location>
        <position position="2239"/>
    </location>
</feature>
<feature type="sequence conflict" description="In Ref. 5; BAC29099." evidence="16" ref="5">
    <original>S</original>
    <variation>T</variation>
    <location>
        <position position="2275"/>
    </location>
</feature>
<sequence length="2282" mass="255047">MTSEEMAASVLIPVTQRKVASAQSVAEERSVKVSDAGIPRARAGRQGALIPPTISQWNKHKEESSRSDLSKVFSIARGELVCDENSNEEGWEENAPDSPENHAMNGNSLVQSHQHQFPRSQLCEARDSVTEDPCLQPGIPSPLERKVLPGIQLEMEDSPMDVSPAGSQPRIMESSGPHSDRNTAVFHFHYEADRTMSDAFHTLSENLILDDCANCVTLPGGQQNKNCMAYACKLVELTRTCGSKNGQVQCEHCTSLRDEYLCFESSCSKADEVCSGGGFCEDGFAHGPAAKTFLNPLEDFSDNCEDVDDFFKSKKERSTLLVRRFCKNDREVKKSVYTGTRAIMRTLPSGCIGPAAWNYVDQKKAGLLWPCGNVMGTLSAMDIRQSGSQRLSEAQWCLIYSAVRRGEEIEDTVGSLLHCSTQLPNSETAHGRIEDGPCLKQCVRDTECEFRATLQRTSIAQYITGSLLEATTSLGARSGLLSSFGGSTGRIMLKERQLGTSMANSNPVPSSSAGISKELIDLQPLIQFPEEVASILTEQEQNIYRRVLPMDYLCFLTRDLSSPECQRSLPRLKASISESILTSQSGEHNALEDLVMRFNEVSSWVTWLILTAGSMEEKREVFSYLVHVAKCCWNMGNYNAVMEFLAGLRSRKVLKMWQFMDQSDIETMRSLKDAMAQHESSVEYKKVVTRALHIPGCKVVPFCGVFLKELCEVLDGASGLLKLCPRYSSQEEALEFVADYSGQDNFLQRVGQNGLKNSEKELTVNSIFQVIRSCSRSLEMEEEDSASEGSGSRKNSLKDKARWQFIIGDLLDSENDIFEKSKECDPHGSEESQKAFDHGTELIPWYVLSIQADVHQFLLQGATVIHYDQDTHLSARCFLQLQPDNSTLTWMKPPTASPAGARPKLGVLSNMAEPGKFPSPGNAGVSGLAEGILDLFSVKAVYMGHPGIDIHTVCVQNKLSSMLLSETGVTLLYGLQTTDNRLLHFVAPKHTAEMLFSGLLELTTAVRKIRRFPDQRQQWLRKQYVSLYQEDGRYEGPTLAHAVELFGGRRWSTRNPSPGMSAKNAEKPNMQRNNTLGISTTKKKKKMLMRGESGEVTDDEMATRKAKMYRECRSRSGSDPQDVNEQEESEANVITNPPNPLHSRRAYSLTTAGSPNLATGMSSPISAWSSSSWHGRIRGGMQGFQSFMVSDSNMSFVEFVELFKSFSIRSRKDLKDIFDIYSVPCNRSASESAPLYTNLTIEENTSDLQPDLDLLTRNVSDLGLFIKSKQQLSDNQRQISDAIAAASIVTNGTGIESTSLGIFGVGILQLNDFLVNCQGEHCTYDEILSIIQKFEPSVSMCHQGLLSFEGFARFLMDKDNFASKNDESRENKKELQLPLSYYYIESSHNTYLTGHQLKGESSVELYSQVLLQGCRSIELDCWDGDDGMPIIYHGHTLTTKIPFKEVVEAIDRSAFITSDLPIIISIENHCSLPQQRKMAEIFKSVFGEKLVAKFLFETDFSDDPMLPSPDQLRRKVLLKNKKLKAHQTPVDILKQKAHQLASMQAQAFTGGNANPPPASNEEEEDEEDEYDYDYESLSDDNILEDRPENKSCADKLQFEYNEEVPKRIKKADNSSGNKGKVYDMELGEEFYLPQNKKESRQIAPELSDLVIYCQAVKFPGLSTLNSSGSSRGKERKSRKSIFGNNPGRMSPGETAPFNRTSGKGSCEGMRHTWEESSPLSPSTSLSAIIRTPKCYHISSLNENAAKRLCRRGSQKLIQHTAYQLLRTYPAATRIDSSNPNPIMFWLHGIQLVALNYQTDDLPLHLNAAMFEANGGCGYVLKPPVLWDKSCPMYQKFSPLERDLDNLDPAIYSLTIISGQNVCPSNSTGSPCIEVDVLGMPLDSCHFRTKPIHRNTLNPMWNEQFLFRVHFEDLVFLRFAVVENNSSAITAQRIIPLRALKRGYRHLQLRNLHNEILEISSLFINSRRMEENPSGSSMPASLMFNTEERKCSQTHKVTVHGVPGPEPFAVFTINEGTKAKQLLQQVLAVDQDTKCTATDYFLMEEKHFISKEKNECRKQPFQRAVGPEEDIVQILNSWFPEEGYVGRIVLKPQQETLEEKSIVFDDKEVILSSEEESFFVQVHDVSPEQPRTVIKAPRVSTAQDVIQQTLCKAKYSYSILNNPNPCDYVLLEEVLKDAANKKSSTPKSSQRILLDQECVFQAQSKWKGAGKFILKLKEQVQASREDKRRGISFASELKKLTKSTKQSRGLPSPPQLVASESVQSKEEKPVGALSSSDTVGYQQ</sequence>
<comment type="function">
    <text evidence="3 10 12 13 14">The production of the second messenger molecules diacylglycerol (DAG) and inositol 1,4,5-trisphosphate (IP3) is mediated by activated phosphatidylinositol-specific phospholipase C enzymes. PLCE1 is a bifunctional enzyme which also regulates small GTPases of the Ras superfamily through its Ras guanine-exchange factor (RasGEF) activity. As an effector of heterotrimeric and small G-protein, it may play a role in cell survival, cell growth, actin organization and T-cell activation. In podocytes, is involved in the regulation of lamellipodia formation. Acts downstream of AVIL to allow ARP2/3 complex assembly (By similarity).</text>
</comment>
<comment type="catalytic activity">
    <reaction evidence="11">
        <text>a 1,2-diacyl-sn-glycero-3-phospho-(1D-myo-inositol-4,5-bisphosphate) + H2O = 1D-myo-inositol 1,4,5-trisphosphate + a 1,2-diacyl-sn-glycerol + H(+)</text>
        <dbReference type="Rhea" id="RHEA:33179"/>
        <dbReference type="ChEBI" id="CHEBI:15377"/>
        <dbReference type="ChEBI" id="CHEBI:15378"/>
        <dbReference type="ChEBI" id="CHEBI:17815"/>
        <dbReference type="ChEBI" id="CHEBI:58456"/>
        <dbReference type="ChEBI" id="CHEBI:203600"/>
        <dbReference type="EC" id="3.1.4.11"/>
    </reaction>
</comment>
<comment type="cofactor">
    <cofactor evidence="1">
        <name>Ca(2+)</name>
        <dbReference type="ChEBI" id="CHEBI:29108"/>
    </cofactor>
</comment>
<comment type="activity regulation">
    <text evidence="1">Activated by the heterotrimeric G-protein subunits GNA12, GNA13 and GNB1-GNG2. Activated by HRAS, RAP1A, RHOA, RHOB, RHOC, RRAS and RRAS2. Activated by the G(s)-coupled GPCRs ADRB2, PTGER1 and CHRM3 through cyclic-AMP formation and RAP2B activation. Inhibited by G(i)-coupled GPCRs (By similarity).</text>
</comment>
<comment type="subunit">
    <text evidence="2 3 15">Interacts with RHOA (By similarity). Interacts with IQGAP1, HRAS, RAP1A, RAP2A, RAP2B and RRAS (By similarity). Interacts with IQGAP1 (PubMed:17086182). Interacts with AVIL (By similarity).</text>
</comment>
<comment type="interaction">
    <interactant intactId="EBI-6902760">
        <id>Q8K4S1</id>
    </interactant>
    <interactant intactId="EBI-643628">
        <id>E9Q401</id>
        <label>Ryr2</label>
    </interactant>
    <organismsDiffer>false</organismsDiffer>
    <experiments>2</experiments>
</comment>
<comment type="subcellular location">
    <subcellularLocation>
        <location evidence="3">Cytoplasm</location>
        <location evidence="3">Cytosol</location>
    </subcellularLocation>
    <subcellularLocation>
        <location evidence="3">Cell membrane</location>
    </subcellularLocation>
    <subcellularLocation>
        <location evidence="3">Golgi apparatus membrane</location>
    </subcellularLocation>
    <subcellularLocation>
        <location evidence="3">Cell projection</location>
        <location evidence="3">Lamellipodium</location>
    </subcellularLocation>
    <text evidence="3">Recruited to plasma membrane by activated HRAS and RAP2. Recruited to perinuclear membrane by activated RAP1A. Isoform 1 and isoform 2 associates with Golgi membranes.</text>
</comment>
<comment type="tissue specificity">
    <text evidence="12 13">Highly expressed in neurons and to a lower extent in skin, skeletal muscle and heart (at protein level). Expressed in the epidermis.</text>
</comment>
<comment type="developmental stage">
    <text evidence="11">Specifically expressed in cells committed to the neuronal lineage (at protein level). Weakly expressed at 7 dpc, expression strongly increases at later embryonic stages. Expressed abundantly in almost all neural tissues at 12.5 dpc and also detected in tongue muscles, genital tubercle and hand plate. At 15.5 dpc a strong expression in skeletal muscles is detected together with the strong expression in neural tissues.</text>
</comment>
<comment type="induction">
    <text evidence="11 14">Up-regulated during the differentiation of neural precursor cells into neurons but not glial cells. Up-regulated in heart upon induced hypertrophy.</text>
</comment>
<comment type="domain">
    <text evidence="1">The Ras-associating domain 1 is degenerated and may not bind HRAS. The Ras-associating domain 2 mediates interaction with GTP-bound HRAS, RAP1A, RAP2A and RAP2B and recruitment of HRAS to the cell membrane (By similarity).</text>
</comment>
<comment type="domain">
    <text evidence="1">The Ras-GEF domain has a GEF activity towards HRAS and RAP1A. Mediates activation of the mitogen-activated protein kinase pathway (By similarity).</text>
</comment>
<comment type="disruption phenotype">
    <text evidence="12 13">Mice exhibit delayed onset and markedly reduced incidence of chemically induced skin squamous tumors. They also display cardiac malformations which mainly affects aortic and pulmonary valves and enhanced susceptibility to cardiac hypertrophy and fibrosis in response to chronic stress.</text>
</comment>
<comment type="sequence caution" evidence="16">
    <conflict type="miscellaneous discrepancy">
        <sequence resource="EMBL-CDS" id="BAC29099"/>
    </conflict>
    <text>Probable cloning artifact.</text>
</comment>
<protein>
    <recommendedName>
        <fullName evidence="16">1-phosphatidylinositol 4,5-bisphosphate phosphodiesterase epsilon-1</fullName>
        <ecNumber evidence="11">3.1.4.11</ecNumber>
    </recommendedName>
    <alternativeName>
        <fullName>Phosphoinositide phospholipase C-epsilon-1</fullName>
    </alternativeName>
    <alternativeName>
        <fullName>Phospholipase C-epsilon-1</fullName>
        <shortName>PLC-epsilon-1</shortName>
    </alternativeName>
</protein>
<keyword id="KW-0106">Calcium</keyword>
<keyword id="KW-1003">Cell membrane</keyword>
<keyword id="KW-0966">Cell projection</keyword>
<keyword id="KW-0963">Cytoplasm</keyword>
<keyword id="KW-0333">Golgi apparatus</keyword>
<keyword id="KW-0344">Guanine-nucleotide releasing factor</keyword>
<keyword id="KW-0378">Hydrolase</keyword>
<keyword id="KW-0442">Lipid degradation</keyword>
<keyword id="KW-0443">Lipid metabolism</keyword>
<keyword id="KW-0472">Membrane</keyword>
<keyword id="KW-0479">Metal-binding</keyword>
<keyword id="KW-0597">Phosphoprotein</keyword>
<keyword id="KW-1185">Reference proteome</keyword>
<keyword id="KW-0677">Repeat</keyword>
<keyword id="KW-0807">Transducer</keyword>
<name>PLCE1_MOUSE</name>
<proteinExistence type="evidence at protein level"/>
<organism>
    <name type="scientific">Mus musculus</name>
    <name type="common">Mouse</name>
    <dbReference type="NCBI Taxonomy" id="10090"/>
    <lineage>
        <taxon>Eukaryota</taxon>
        <taxon>Metazoa</taxon>
        <taxon>Chordata</taxon>
        <taxon>Craniata</taxon>
        <taxon>Vertebrata</taxon>
        <taxon>Euteleostomi</taxon>
        <taxon>Mammalia</taxon>
        <taxon>Eutheria</taxon>
        <taxon>Euarchontoglires</taxon>
        <taxon>Glires</taxon>
        <taxon>Rodentia</taxon>
        <taxon>Myomorpha</taxon>
        <taxon>Muroidea</taxon>
        <taxon>Muridae</taxon>
        <taxon>Murinae</taxon>
        <taxon>Mus</taxon>
        <taxon>Mus</taxon>
    </lineage>
</organism>
<accession>Q8K4S1</accession>
<accession>B9EHS1</accession>
<accession>E9Q5G0</accession>
<accession>Q3TS68</accession>
<accession>Q80TC4</accession>
<accession>Q8BZF3</accession>
<accession>Q9JKM2</accession>
<dbReference type="EC" id="3.1.4.11" evidence="11"/>
<dbReference type="EMBL" id="AB076247">
    <property type="protein sequence ID" value="BAC00906.1"/>
    <property type="molecule type" value="mRNA"/>
</dbReference>
<dbReference type="EMBL" id="AC111023">
    <property type="status" value="NOT_ANNOTATED_CDS"/>
    <property type="molecule type" value="Genomic_DNA"/>
</dbReference>
<dbReference type="EMBL" id="AC158905">
    <property type="status" value="NOT_ANNOTATED_CDS"/>
    <property type="molecule type" value="Genomic_DNA"/>
</dbReference>
<dbReference type="EMBL" id="BC138349">
    <property type="protein sequence ID" value="AAI38350.1"/>
    <property type="molecule type" value="mRNA"/>
</dbReference>
<dbReference type="EMBL" id="BC138350">
    <property type="protein sequence ID" value="AAI38351.1"/>
    <property type="molecule type" value="mRNA"/>
</dbReference>
<dbReference type="EMBL" id="AK122521">
    <property type="protein sequence ID" value="BAC65803.1"/>
    <property type="molecule type" value="mRNA"/>
</dbReference>
<dbReference type="EMBL" id="AK035546">
    <property type="protein sequence ID" value="BAC29099.1"/>
    <property type="status" value="ALT_SEQ"/>
    <property type="molecule type" value="mRNA"/>
</dbReference>
<dbReference type="EMBL" id="AK162236">
    <property type="protein sequence ID" value="BAE36807.1"/>
    <property type="molecule type" value="mRNA"/>
</dbReference>
<dbReference type="EMBL" id="AF233885">
    <property type="protein sequence ID" value="AAF40208.1"/>
    <property type="molecule type" value="mRNA"/>
</dbReference>
<dbReference type="CCDS" id="CCDS37973.1"/>
<dbReference type="RefSeq" id="NP_062534.2">
    <property type="nucleotide sequence ID" value="NM_019588.2"/>
</dbReference>
<dbReference type="RefSeq" id="XP_011245682.1">
    <property type="nucleotide sequence ID" value="XM_011247380.3"/>
</dbReference>
<dbReference type="SMR" id="Q8K4S1"/>
<dbReference type="BioGRID" id="216456">
    <property type="interactions" value="2"/>
</dbReference>
<dbReference type="DIP" id="DIP-60738N"/>
<dbReference type="FunCoup" id="Q8K4S1">
    <property type="interactions" value="926"/>
</dbReference>
<dbReference type="IntAct" id="Q8K4S1">
    <property type="interactions" value="3"/>
</dbReference>
<dbReference type="STRING" id="10090.ENSMUSP00000130604"/>
<dbReference type="iPTMnet" id="Q8K4S1"/>
<dbReference type="PhosphoSitePlus" id="Q8K4S1"/>
<dbReference type="PaxDb" id="10090-ENSMUSP00000130604"/>
<dbReference type="ProteomicsDB" id="289677"/>
<dbReference type="Antibodypedia" id="2889">
    <property type="antibodies" value="47 antibodies from 14 providers"/>
</dbReference>
<dbReference type="DNASU" id="74055"/>
<dbReference type="Ensembl" id="ENSMUST00000169713.9">
    <property type="protein sequence ID" value="ENSMUSP00000130604.2"/>
    <property type="gene ID" value="ENSMUSG00000024998.18"/>
</dbReference>
<dbReference type="Ensembl" id="ENSMUST00000182481.8">
    <property type="protein sequence ID" value="ENSMUSP00000138360.2"/>
    <property type="gene ID" value="ENSMUSG00000024998.18"/>
</dbReference>
<dbReference type="GeneID" id="74055"/>
<dbReference type="KEGG" id="mmu:74055"/>
<dbReference type="UCSC" id="uc008hjp.1">
    <property type="organism name" value="mouse"/>
</dbReference>
<dbReference type="AGR" id="MGI:1921305"/>
<dbReference type="CTD" id="51196"/>
<dbReference type="MGI" id="MGI:1921305">
    <property type="gene designation" value="Plce1"/>
</dbReference>
<dbReference type="VEuPathDB" id="HostDB:ENSMUSG00000024998"/>
<dbReference type="eggNOG" id="KOG0169">
    <property type="taxonomic scope" value="Eukaryota"/>
</dbReference>
<dbReference type="GeneTree" id="ENSGT00940000157356"/>
<dbReference type="InParanoid" id="Q8K4S1"/>
<dbReference type="TreeFam" id="TF314432"/>
<dbReference type="BRENDA" id="3.1.4.11">
    <property type="organism ID" value="3474"/>
</dbReference>
<dbReference type="Reactome" id="R-MMU-1855204">
    <property type="pathway name" value="Synthesis of IP3 and IP4 in the cytosol"/>
</dbReference>
<dbReference type="BioGRID-ORCS" id="74055">
    <property type="hits" value="5 hits in 79 CRISPR screens"/>
</dbReference>
<dbReference type="ChiTaRS" id="Plce1">
    <property type="organism name" value="mouse"/>
</dbReference>
<dbReference type="PRO" id="PR:Q8K4S1"/>
<dbReference type="Proteomes" id="UP000000589">
    <property type="component" value="Chromosome 19"/>
</dbReference>
<dbReference type="RNAct" id="Q8K4S1">
    <property type="molecule type" value="protein"/>
</dbReference>
<dbReference type="Bgee" id="ENSMUSG00000024998">
    <property type="expression patterns" value="Expressed in pigmented layer of retina and 228 other cell types or tissues"/>
</dbReference>
<dbReference type="ExpressionAtlas" id="Q8K4S1">
    <property type="expression patterns" value="baseline and differential"/>
</dbReference>
<dbReference type="GO" id="GO:0005829">
    <property type="term" value="C:cytosol"/>
    <property type="evidence" value="ECO:0000250"/>
    <property type="project" value="UniProtKB"/>
</dbReference>
<dbReference type="GO" id="GO:0000139">
    <property type="term" value="C:Golgi membrane"/>
    <property type="evidence" value="ECO:0007669"/>
    <property type="project" value="UniProtKB-SubCell"/>
</dbReference>
<dbReference type="GO" id="GO:0030027">
    <property type="term" value="C:lamellipodium"/>
    <property type="evidence" value="ECO:0000250"/>
    <property type="project" value="UniProtKB"/>
</dbReference>
<dbReference type="GO" id="GO:0005886">
    <property type="term" value="C:plasma membrane"/>
    <property type="evidence" value="ECO:0000250"/>
    <property type="project" value="UniProtKB"/>
</dbReference>
<dbReference type="GO" id="GO:0019899">
    <property type="term" value="F:enzyme binding"/>
    <property type="evidence" value="ECO:0000250"/>
    <property type="project" value="UniProtKB"/>
</dbReference>
<dbReference type="GO" id="GO:0005085">
    <property type="term" value="F:guanyl-nucleotide exchange factor activity"/>
    <property type="evidence" value="ECO:0007669"/>
    <property type="project" value="UniProtKB-KW"/>
</dbReference>
<dbReference type="GO" id="GO:0046872">
    <property type="term" value="F:metal ion binding"/>
    <property type="evidence" value="ECO:0007669"/>
    <property type="project" value="UniProtKB-KW"/>
</dbReference>
<dbReference type="GO" id="GO:0004435">
    <property type="term" value="F:phosphatidylinositol-4,5-bisphosphate phospholipase C activity"/>
    <property type="evidence" value="ECO:0000250"/>
    <property type="project" value="UniProtKB"/>
</dbReference>
<dbReference type="GO" id="GO:0004629">
    <property type="term" value="F:phospholipase C activity"/>
    <property type="evidence" value="ECO:0000250"/>
    <property type="project" value="UniProtKB"/>
</dbReference>
<dbReference type="GO" id="GO:0006651">
    <property type="term" value="P:diacylglycerol biosynthetic process"/>
    <property type="evidence" value="ECO:0000250"/>
    <property type="project" value="UniProtKB"/>
</dbReference>
<dbReference type="GO" id="GO:0007173">
    <property type="term" value="P:epidermal growth factor receptor signaling pathway"/>
    <property type="evidence" value="ECO:0000250"/>
    <property type="project" value="UniProtKB"/>
</dbReference>
<dbReference type="GO" id="GO:0035556">
    <property type="term" value="P:intracellular signal transduction"/>
    <property type="evidence" value="ECO:0000250"/>
    <property type="project" value="UniProtKB"/>
</dbReference>
<dbReference type="GO" id="GO:0016042">
    <property type="term" value="P:lipid catabolic process"/>
    <property type="evidence" value="ECO:0007669"/>
    <property type="project" value="UniProtKB-KW"/>
</dbReference>
<dbReference type="GO" id="GO:0007200">
    <property type="term" value="P:phospholipase C-activating G protein-coupled receptor signaling pathway"/>
    <property type="evidence" value="ECO:0000250"/>
    <property type="project" value="UniProtKB"/>
</dbReference>
<dbReference type="GO" id="GO:0010592">
    <property type="term" value="P:positive regulation of lamellipodium assembly"/>
    <property type="evidence" value="ECO:0000250"/>
    <property type="project" value="UniProtKB"/>
</dbReference>
<dbReference type="GO" id="GO:0007264">
    <property type="term" value="P:small GTPase-mediated signal transduction"/>
    <property type="evidence" value="ECO:0007669"/>
    <property type="project" value="InterPro"/>
</dbReference>
<dbReference type="CDD" id="cd00275">
    <property type="entry name" value="C2_PLC_like"/>
    <property type="match status" value="1"/>
</dbReference>
<dbReference type="CDD" id="cd16203">
    <property type="entry name" value="EFh_PI-PLCepsilon"/>
    <property type="match status" value="1"/>
</dbReference>
<dbReference type="CDD" id="cd08596">
    <property type="entry name" value="PI-PLCc_epsilon"/>
    <property type="match status" value="1"/>
</dbReference>
<dbReference type="CDD" id="cd17229">
    <property type="entry name" value="RA1_PLC-epsilon"/>
    <property type="match status" value="1"/>
</dbReference>
<dbReference type="CDD" id="cd01780">
    <property type="entry name" value="RA2_PLC-epsilon"/>
    <property type="match status" value="1"/>
</dbReference>
<dbReference type="FunFam" id="1.10.238.10:FF:000092">
    <property type="entry name" value="Phosphoinositide phospholipase C"/>
    <property type="match status" value="1"/>
</dbReference>
<dbReference type="FunFam" id="2.60.40.150:FF:000085">
    <property type="entry name" value="Phosphoinositide phospholipase C"/>
    <property type="match status" value="1"/>
</dbReference>
<dbReference type="FunFam" id="3.10.20.90:FF:000086">
    <property type="entry name" value="Phosphoinositide phospholipase C"/>
    <property type="match status" value="1"/>
</dbReference>
<dbReference type="FunFam" id="3.10.20.90:FF:000118">
    <property type="entry name" value="Phosphoinositide phospholipase C"/>
    <property type="match status" value="1"/>
</dbReference>
<dbReference type="FunFam" id="3.20.20.190:FF:000090">
    <property type="entry name" value="Phosphoinositide phospholipase C"/>
    <property type="match status" value="1"/>
</dbReference>
<dbReference type="Gene3D" id="2.60.40.150">
    <property type="entry name" value="C2 domain"/>
    <property type="match status" value="1"/>
</dbReference>
<dbReference type="Gene3D" id="1.10.238.10">
    <property type="entry name" value="EF-hand"/>
    <property type="match status" value="1"/>
</dbReference>
<dbReference type="Gene3D" id="3.20.20.190">
    <property type="entry name" value="Phosphatidylinositol (PI) phosphodiesterase"/>
    <property type="match status" value="1"/>
</dbReference>
<dbReference type="Gene3D" id="3.10.20.90">
    <property type="entry name" value="Phosphatidylinositol 3-kinase Catalytic Subunit, Chain A, domain 1"/>
    <property type="match status" value="2"/>
</dbReference>
<dbReference type="Gene3D" id="1.10.840.10">
    <property type="entry name" value="Ras guanine-nucleotide exchange factors catalytic domain"/>
    <property type="match status" value="1"/>
</dbReference>
<dbReference type="InterPro" id="IPR000008">
    <property type="entry name" value="C2_dom"/>
</dbReference>
<dbReference type="InterPro" id="IPR035892">
    <property type="entry name" value="C2_domain_sf"/>
</dbReference>
<dbReference type="InterPro" id="IPR011992">
    <property type="entry name" value="EF-hand-dom_pair"/>
</dbReference>
<dbReference type="InterPro" id="IPR001192">
    <property type="entry name" value="PI-PLC_fam"/>
</dbReference>
<dbReference type="InterPro" id="IPR046973">
    <property type="entry name" value="PLC-epsilon1_cat"/>
</dbReference>
<dbReference type="InterPro" id="IPR028398">
    <property type="entry name" value="PLC-epsilon1_RA2"/>
</dbReference>
<dbReference type="InterPro" id="IPR017946">
    <property type="entry name" value="PLC-like_Pdiesterase_TIM-brl"/>
</dbReference>
<dbReference type="InterPro" id="IPR015359">
    <property type="entry name" value="PLC_EF-hand-like"/>
</dbReference>
<dbReference type="InterPro" id="IPR046974">
    <property type="entry name" value="PLC_epsilon1_EF"/>
</dbReference>
<dbReference type="InterPro" id="IPR000909">
    <property type="entry name" value="PLipase_C_PInositol-sp_X_dom"/>
</dbReference>
<dbReference type="InterPro" id="IPR001711">
    <property type="entry name" value="PLipase_C_Pinositol-sp_Y"/>
</dbReference>
<dbReference type="InterPro" id="IPR000159">
    <property type="entry name" value="RA_dom"/>
</dbReference>
<dbReference type="InterPro" id="IPR023578">
    <property type="entry name" value="Ras_GEF_dom_sf"/>
</dbReference>
<dbReference type="InterPro" id="IPR001895">
    <property type="entry name" value="RASGEF_cat_dom"/>
</dbReference>
<dbReference type="InterPro" id="IPR036964">
    <property type="entry name" value="RASGEF_cat_dom_sf"/>
</dbReference>
<dbReference type="InterPro" id="IPR029071">
    <property type="entry name" value="Ubiquitin-like_domsf"/>
</dbReference>
<dbReference type="PANTHER" id="PTHR10336:SF6">
    <property type="entry name" value="1-PHOSPHATIDYLINOSITOL 4,5-BISPHOSPHATE PHOSPHODIESTERASE EPSILON-1"/>
    <property type="match status" value="1"/>
</dbReference>
<dbReference type="PANTHER" id="PTHR10336">
    <property type="entry name" value="PHOSPHOINOSITIDE-SPECIFIC PHOSPHOLIPASE C FAMILY PROTEIN"/>
    <property type="match status" value="1"/>
</dbReference>
<dbReference type="Pfam" id="PF00168">
    <property type="entry name" value="C2"/>
    <property type="match status" value="1"/>
</dbReference>
<dbReference type="Pfam" id="PF09279">
    <property type="entry name" value="EF-hand_like"/>
    <property type="match status" value="1"/>
</dbReference>
<dbReference type="Pfam" id="PF00388">
    <property type="entry name" value="PI-PLC-X"/>
    <property type="match status" value="1"/>
</dbReference>
<dbReference type="Pfam" id="PF00387">
    <property type="entry name" value="PI-PLC-Y"/>
    <property type="match status" value="1"/>
</dbReference>
<dbReference type="Pfam" id="PF00788">
    <property type="entry name" value="RA"/>
    <property type="match status" value="1"/>
</dbReference>
<dbReference type="Pfam" id="PF00617">
    <property type="entry name" value="RasGEF"/>
    <property type="match status" value="1"/>
</dbReference>
<dbReference type="PRINTS" id="PR00390">
    <property type="entry name" value="PHPHLIPASEC"/>
</dbReference>
<dbReference type="SMART" id="SM00239">
    <property type="entry name" value="C2"/>
    <property type="match status" value="1"/>
</dbReference>
<dbReference type="SMART" id="SM00148">
    <property type="entry name" value="PLCXc"/>
    <property type="match status" value="1"/>
</dbReference>
<dbReference type="SMART" id="SM00149">
    <property type="entry name" value="PLCYc"/>
    <property type="match status" value="1"/>
</dbReference>
<dbReference type="SMART" id="SM00147">
    <property type="entry name" value="RasGEF"/>
    <property type="match status" value="1"/>
</dbReference>
<dbReference type="SUPFAM" id="SSF49562">
    <property type="entry name" value="C2 domain (Calcium/lipid-binding domain, CaLB)"/>
    <property type="match status" value="1"/>
</dbReference>
<dbReference type="SUPFAM" id="SSF47473">
    <property type="entry name" value="EF-hand"/>
    <property type="match status" value="1"/>
</dbReference>
<dbReference type="SUPFAM" id="SSF51695">
    <property type="entry name" value="PLC-like phosphodiesterases"/>
    <property type="match status" value="1"/>
</dbReference>
<dbReference type="SUPFAM" id="SSF48366">
    <property type="entry name" value="Ras GEF"/>
    <property type="match status" value="1"/>
</dbReference>
<dbReference type="SUPFAM" id="SSF54236">
    <property type="entry name" value="Ubiquitin-like"/>
    <property type="match status" value="2"/>
</dbReference>
<dbReference type="PROSITE" id="PS50004">
    <property type="entry name" value="C2"/>
    <property type="match status" value="1"/>
</dbReference>
<dbReference type="PROSITE" id="PS50007">
    <property type="entry name" value="PIPLC_X_DOMAIN"/>
    <property type="match status" value="1"/>
</dbReference>
<dbReference type="PROSITE" id="PS50008">
    <property type="entry name" value="PIPLC_Y_DOMAIN"/>
    <property type="match status" value="1"/>
</dbReference>
<dbReference type="PROSITE" id="PS50200">
    <property type="entry name" value="RA"/>
    <property type="match status" value="1"/>
</dbReference>
<dbReference type="PROSITE" id="PS50009">
    <property type="entry name" value="RASGEF_CAT"/>
    <property type="match status" value="1"/>
</dbReference>
<evidence type="ECO:0000250" key="1"/>
<evidence type="ECO:0000250" key="2">
    <source>
        <dbReference type="UniProtKB" id="Q99P84"/>
    </source>
</evidence>
<evidence type="ECO:0000250" key="3">
    <source>
        <dbReference type="UniProtKB" id="Q9P212"/>
    </source>
</evidence>
<evidence type="ECO:0000255" key="4">
    <source>
        <dbReference type="PROSITE-ProRule" id="PRU00041"/>
    </source>
</evidence>
<evidence type="ECO:0000255" key="5">
    <source>
        <dbReference type="PROSITE-ProRule" id="PRU00166"/>
    </source>
</evidence>
<evidence type="ECO:0000255" key="6">
    <source>
        <dbReference type="PROSITE-ProRule" id="PRU00168"/>
    </source>
</evidence>
<evidence type="ECO:0000255" key="7">
    <source>
        <dbReference type="PROSITE-ProRule" id="PRU00270"/>
    </source>
</evidence>
<evidence type="ECO:0000255" key="8">
    <source>
        <dbReference type="PROSITE-ProRule" id="PRU00271"/>
    </source>
</evidence>
<evidence type="ECO:0000256" key="9">
    <source>
        <dbReference type="SAM" id="MobiDB-lite"/>
    </source>
</evidence>
<evidence type="ECO:0000269" key="10">
    <source>
    </source>
</evidence>
<evidence type="ECO:0000269" key="11">
    <source>
    </source>
</evidence>
<evidence type="ECO:0000269" key="12">
    <source>
    </source>
</evidence>
<evidence type="ECO:0000269" key="13">
    <source>
    </source>
</evidence>
<evidence type="ECO:0000269" key="14">
    <source>
    </source>
</evidence>
<evidence type="ECO:0000269" key="15">
    <source>
    </source>
</evidence>
<evidence type="ECO:0000305" key="16"/>
<evidence type="ECO:0000312" key="17">
    <source>
        <dbReference type="MGI" id="MGI:1921305"/>
    </source>
</evidence>
<evidence type="ECO:0007744" key="18">
    <source>
    </source>
</evidence>
<reference key="1">
    <citation type="journal article" date="2003" name="Eur. J. Neurosci.">
        <title>Neuronal lineage-specific induction of phospholipase Cepsilon expression in the developing mouse brain.</title>
        <authorList>
            <person name="Wu D."/>
            <person name="Tadano M."/>
            <person name="Edamatsu H."/>
            <person name="Masago-Toda M."/>
            <person name="Yamawaki-Kataoka Y."/>
            <person name="Terashima T."/>
            <person name="Mizoguchi A."/>
            <person name="Minami Y."/>
            <person name="Satoh T."/>
            <person name="Kataoka T."/>
        </authorList>
    </citation>
    <scope>NUCLEOTIDE SEQUENCE [MRNA]</scope>
    <scope>CATALYTIC ACTIVITY</scope>
    <scope>DEVELOPMENTAL STAGE</scope>
    <scope>INDUCTION</scope>
    <source>
        <tissue>Embryo</tissue>
    </source>
</reference>
<reference key="2">
    <citation type="journal article" date="2009" name="PLoS Biol.">
        <title>Lineage-specific biology revealed by a finished genome assembly of the mouse.</title>
        <authorList>
            <person name="Church D.M."/>
            <person name="Goodstadt L."/>
            <person name="Hillier L.W."/>
            <person name="Zody M.C."/>
            <person name="Goldstein S."/>
            <person name="She X."/>
            <person name="Bult C.J."/>
            <person name="Agarwala R."/>
            <person name="Cherry J.L."/>
            <person name="DiCuccio M."/>
            <person name="Hlavina W."/>
            <person name="Kapustin Y."/>
            <person name="Meric P."/>
            <person name="Maglott D."/>
            <person name="Birtle Z."/>
            <person name="Marques A.C."/>
            <person name="Graves T."/>
            <person name="Zhou S."/>
            <person name="Teague B."/>
            <person name="Potamousis K."/>
            <person name="Churas C."/>
            <person name="Place M."/>
            <person name="Herschleb J."/>
            <person name="Runnheim R."/>
            <person name="Forrest D."/>
            <person name="Amos-Landgraf J."/>
            <person name="Schwartz D.C."/>
            <person name="Cheng Z."/>
            <person name="Lindblad-Toh K."/>
            <person name="Eichler E.E."/>
            <person name="Ponting C.P."/>
        </authorList>
    </citation>
    <scope>NUCLEOTIDE SEQUENCE [LARGE SCALE GENOMIC DNA]</scope>
    <source>
        <strain>C57BL/6J</strain>
    </source>
</reference>
<reference key="3">
    <citation type="journal article" date="2004" name="Genome Res.">
        <title>The status, quality, and expansion of the NIH full-length cDNA project: the Mammalian Gene Collection (MGC).</title>
        <authorList>
            <consortium name="The MGC Project Team"/>
        </authorList>
    </citation>
    <scope>NUCLEOTIDE SEQUENCE [LARGE SCALE MRNA]</scope>
    <source>
        <tissue>Brain</tissue>
    </source>
</reference>
<reference key="4">
    <citation type="journal article" date="2003" name="DNA Res.">
        <title>Prediction of the coding sequences of mouse homologues of KIAA gene: II. The complete nucleotide sequences of 400 mouse KIAA-homologous cDNAs identified by screening of terminal sequences of cDNA clones randomly sampled from size-fractionated libraries.</title>
        <authorList>
            <person name="Okazaki N."/>
            <person name="Kikuno R."/>
            <person name="Ohara R."/>
            <person name="Inamoto S."/>
            <person name="Aizawa H."/>
            <person name="Yuasa S."/>
            <person name="Nakajima D."/>
            <person name="Nagase T."/>
            <person name="Ohara O."/>
            <person name="Koga H."/>
        </authorList>
    </citation>
    <scope>NUCLEOTIDE SEQUENCE [LARGE SCALE MRNA] OF 919-2282</scope>
    <source>
        <tissue>Brain</tissue>
    </source>
</reference>
<reference key="5">
    <citation type="journal article" date="2005" name="Science">
        <title>The transcriptional landscape of the mammalian genome.</title>
        <authorList>
            <person name="Carninci P."/>
            <person name="Kasukawa T."/>
            <person name="Katayama S."/>
            <person name="Gough J."/>
            <person name="Frith M.C."/>
            <person name="Maeda N."/>
            <person name="Oyama R."/>
            <person name="Ravasi T."/>
            <person name="Lenhard B."/>
            <person name="Wells C."/>
            <person name="Kodzius R."/>
            <person name="Shimokawa K."/>
            <person name="Bajic V.B."/>
            <person name="Brenner S.E."/>
            <person name="Batalov S."/>
            <person name="Forrest A.R."/>
            <person name="Zavolan M."/>
            <person name="Davis M.J."/>
            <person name="Wilming L.G."/>
            <person name="Aidinis V."/>
            <person name="Allen J.E."/>
            <person name="Ambesi-Impiombato A."/>
            <person name="Apweiler R."/>
            <person name="Aturaliya R.N."/>
            <person name="Bailey T.L."/>
            <person name="Bansal M."/>
            <person name="Baxter L."/>
            <person name="Beisel K.W."/>
            <person name="Bersano T."/>
            <person name="Bono H."/>
            <person name="Chalk A.M."/>
            <person name="Chiu K.P."/>
            <person name="Choudhary V."/>
            <person name="Christoffels A."/>
            <person name="Clutterbuck D.R."/>
            <person name="Crowe M.L."/>
            <person name="Dalla E."/>
            <person name="Dalrymple B.P."/>
            <person name="de Bono B."/>
            <person name="Della Gatta G."/>
            <person name="di Bernardo D."/>
            <person name="Down T."/>
            <person name="Engstrom P."/>
            <person name="Fagiolini M."/>
            <person name="Faulkner G."/>
            <person name="Fletcher C.F."/>
            <person name="Fukushima T."/>
            <person name="Furuno M."/>
            <person name="Futaki S."/>
            <person name="Gariboldi M."/>
            <person name="Georgii-Hemming P."/>
            <person name="Gingeras T.R."/>
            <person name="Gojobori T."/>
            <person name="Green R.E."/>
            <person name="Gustincich S."/>
            <person name="Harbers M."/>
            <person name="Hayashi Y."/>
            <person name="Hensch T.K."/>
            <person name="Hirokawa N."/>
            <person name="Hill D."/>
            <person name="Huminiecki L."/>
            <person name="Iacono M."/>
            <person name="Ikeo K."/>
            <person name="Iwama A."/>
            <person name="Ishikawa T."/>
            <person name="Jakt M."/>
            <person name="Kanapin A."/>
            <person name="Katoh M."/>
            <person name="Kawasawa Y."/>
            <person name="Kelso J."/>
            <person name="Kitamura H."/>
            <person name="Kitano H."/>
            <person name="Kollias G."/>
            <person name="Krishnan S.P."/>
            <person name="Kruger A."/>
            <person name="Kummerfeld S.K."/>
            <person name="Kurochkin I.V."/>
            <person name="Lareau L.F."/>
            <person name="Lazarevic D."/>
            <person name="Lipovich L."/>
            <person name="Liu J."/>
            <person name="Liuni S."/>
            <person name="McWilliam S."/>
            <person name="Madan Babu M."/>
            <person name="Madera M."/>
            <person name="Marchionni L."/>
            <person name="Matsuda H."/>
            <person name="Matsuzawa S."/>
            <person name="Miki H."/>
            <person name="Mignone F."/>
            <person name="Miyake S."/>
            <person name="Morris K."/>
            <person name="Mottagui-Tabar S."/>
            <person name="Mulder N."/>
            <person name="Nakano N."/>
            <person name="Nakauchi H."/>
            <person name="Ng P."/>
            <person name="Nilsson R."/>
            <person name="Nishiguchi S."/>
            <person name="Nishikawa S."/>
            <person name="Nori F."/>
            <person name="Ohara O."/>
            <person name="Okazaki Y."/>
            <person name="Orlando V."/>
            <person name="Pang K.C."/>
            <person name="Pavan W.J."/>
            <person name="Pavesi G."/>
            <person name="Pesole G."/>
            <person name="Petrovsky N."/>
            <person name="Piazza S."/>
            <person name="Reed J."/>
            <person name="Reid J.F."/>
            <person name="Ring B.Z."/>
            <person name="Ringwald M."/>
            <person name="Rost B."/>
            <person name="Ruan Y."/>
            <person name="Salzberg S.L."/>
            <person name="Sandelin A."/>
            <person name="Schneider C."/>
            <person name="Schoenbach C."/>
            <person name="Sekiguchi K."/>
            <person name="Semple C.A."/>
            <person name="Seno S."/>
            <person name="Sessa L."/>
            <person name="Sheng Y."/>
            <person name="Shibata Y."/>
            <person name="Shimada H."/>
            <person name="Shimada K."/>
            <person name="Silva D."/>
            <person name="Sinclair B."/>
            <person name="Sperling S."/>
            <person name="Stupka E."/>
            <person name="Sugiura K."/>
            <person name="Sultana R."/>
            <person name="Takenaka Y."/>
            <person name="Taki K."/>
            <person name="Tammoja K."/>
            <person name="Tan S.L."/>
            <person name="Tang S."/>
            <person name="Taylor M.S."/>
            <person name="Tegner J."/>
            <person name="Teichmann S.A."/>
            <person name="Ueda H.R."/>
            <person name="van Nimwegen E."/>
            <person name="Verardo R."/>
            <person name="Wei C.L."/>
            <person name="Yagi K."/>
            <person name="Yamanishi H."/>
            <person name="Zabarovsky E."/>
            <person name="Zhu S."/>
            <person name="Zimmer A."/>
            <person name="Hide W."/>
            <person name="Bult C."/>
            <person name="Grimmond S.M."/>
            <person name="Teasdale R.D."/>
            <person name="Liu E.T."/>
            <person name="Brusic V."/>
            <person name="Quackenbush J."/>
            <person name="Wahlestedt C."/>
            <person name="Mattick J.S."/>
            <person name="Hume D.A."/>
            <person name="Kai C."/>
            <person name="Sasaki D."/>
            <person name="Tomaru Y."/>
            <person name="Fukuda S."/>
            <person name="Kanamori-Katayama M."/>
            <person name="Suzuki M."/>
            <person name="Aoki J."/>
            <person name="Arakawa T."/>
            <person name="Iida J."/>
            <person name="Imamura K."/>
            <person name="Itoh M."/>
            <person name="Kato T."/>
            <person name="Kawaji H."/>
            <person name="Kawagashira N."/>
            <person name="Kawashima T."/>
            <person name="Kojima M."/>
            <person name="Kondo S."/>
            <person name="Konno H."/>
            <person name="Nakano K."/>
            <person name="Ninomiya N."/>
            <person name="Nishio T."/>
            <person name="Okada M."/>
            <person name="Plessy C."/>
            <person name="Shibata K."/>
            <person name="Shiraki T."/>
            <person name="Suzuki S."/>
            <person name="Tagami M."/>
            <person name="Waki K."/>
            <person name="Watahiki A."/>
            <person name="Okamura-Oho Y."/>
            <person name="Suzuki H."/>
            <person name="Kawai J."/>
            <person name="Hayashizaki Y."/>
        </authorList>
    </citation>
    <scope>NUCLEOTIDE SEQUENCE [LARGE SCALE MRNA] OF 1166-2282</scope>
    <source>
        <strain>C57BL/6J</strain>
        <tissue>Egg</tissue>
        <tissue>Urinary bladder</tissue>
    </source>
</reference>
<reference key="6">
    <citation type="journal article" date="2001" name="Dev. Dyn.">
        <title>A novel transgenic marker for migrating limb muscle precursors and for vascular smooth muscle cells.</title>
        <authorList>
            <person name="Tidhar A."/>
            <person name="Reichenstein M."/>
            <person name="Cohen D."/>
            <person name="Faerman A."/>
            <person name="Copeland N.G."/>
            <person name="Gilbert D.J."/>
            <person name="Jenkins N.A."/>
            <person name="Shani M."/>
        </authorList>
    </citation>
    <scope>NUCLEOTIDE SEQUENCE [MRNA] OF 1661-2282</scope>
</reference>
<reference key="7">
    <citation type="journal article" date="2003" name="Proc. Natl. Acad. Sci. U.S.A.">
        <title>Activation of CD4 T cells by Raf-independent effectors of Ras.</title>
        <authorList>
            <person name="Czyzyk J."/>
            <person name="Brogdon J.L."/>
            <person name="Badou A."/>
            <person name="Henegariu O."/>
            <person name="Preston Hurlburt P."/>
            <person name="Flavell R."/>
            <person name="Bottomly K."/>
        </authorList>
    </citation>
    <scope>FUNCTION</scope>
</reference>
<reference key="8">
    <citation type="journal article" date="2004" name="Cancer Res.">
        <title>Crucial role of phospholipase Cepsilon in chemical carcinogen-induced skin tumor development.</title>
        <authorList>
            <person name="Bai Y."/>
            <person name="Edamatsu H."/>
            <person name="Maeda S."/>
            <person name="Saito H."/>
            <person name="Suzuki N."/>
            <person name="Satoh T."/>
            <person name="Kataoka T."/>
        </authorList>
    </citation>
    <scope>FUNCTION</scope>
    <scope>TISSUE SPECIFICITY</scope>
    <scope>DISRUPTION PHENOTYPE</scope>
</reference>
<reference key="9">
    <citation type="journal article" date="2005" name="Circ. Res.">
        <title>Phospholipase C epsilon modulates beta-adrenergic receptor-dependent cardiac contraction and inhibits cardiac hypertrophy.</title>
        <authorList>
            <person name="Wang H."/>
            <person name="Oestreich E.A."/>
            <person name="Maekawa N."/>
            <person name="Bullard T.A."/>
            <person name="Vikstrom K.L."/>
            <person name="Dirksen R.T."/>
            <person name="Kelley G.G."/>
            <person name="Blaxall B.C."/>
            <person name="Smrcka A.V."/>
        </authorList>
    </citation>
    <scope>FUNCTION</scope>
    <scope>INDUCTION</scope>
</reference>
<reference key="10">
    <citation type="journal article" date="2005" name="Mol. Cell. Biol.">
        <title>Congenital semilunar valvulogenesis defect in mice deficient in phospholipase C epsilon.</title>
        <authorList>
            <person name="Tadano M."/>
            <person name="Edamatsu H."/>
            <person name="Minamisawa S."/>
            <person name="Yokoyama U."/>
            <person name="Ishikawa Y."/>
            <person name="Suzuki N."/>
            <person name="Saito H."/>
            <person name="Wu D."/>
            <person name="Masago-Toda M."/>
            <person name="Yamawaki-Kataoka Y."/>
            <person name="Setsu T."/>
            <person name="Terashima T."/>
            <person name="Maeda S."/>
            <person name="Satoh T."/>
            <person name="Kataoka T."/>
        </authorList>
    </citation>
    <scope>FUNCTION</scope>
    <scope>TISSUE SPECIFICITY</scope>
    <scope>DISRUPTION PHENOTYPE</scope>
</reference>
<reference key="11">
    <citation type="journal article" date="2006" name="Nat. Genet.">
        <title>Positional cloning uncovers mutations in PLCE1 responsible for a nephrotic syndrome variant that may be reversible.</title>
        <authorList>
            <person name="Hinkes B."/>
            <person name="Wiggins R.C."/>
            <person name="Gbadegesin R."/>
            <person name="Vlangos C.N."/>
            <person name="Seelow D."/>
            <person name="Nuernberg G."/>
            <person name="Garg P."/>
            <person name="Verma R."/>
            <person name="Chaib H."/>
            <person name="Hoskins B.E."/>
            <person name="Ashraf S."/>
            <person name="Becker C."/>
            <person name="Hennies H.C."/>
            <person name="Goyal M."/>
            <person name="Wharram B.L."/>
            <person name="Schachter A.D."/>
            <person name="Mudumana S."/>
            <person name="Drummond I."/>
            <person name="Kerjaschki D."/>
            <person name="Waldherr R."/>
            <person name="Dietrich A."/>
            <person name="Ozaltin F."/>
            <person name="Bakkaloglu A."/>
            <person name="Cleper R."/>
            <person name="Basel-Vanagaite L."/>
            <person name="Pohl M."/>
            <person name="Griebel M."/>
            <person name="Tsygin A.N."/>
            <person name="Soylu A."/>
            <person name="Mueller D."/>
            <person name="Sorli C.S."/>
            <person name="Bunney T.D."/>
            <person name="Katan M."/>
            <person name="Liu J."/>
            <person name="Attanasio M."/>
            <person name="O'toole J.F."/>
            <person name="Hasselbacher K."/>
            <person name="Mucha B."/>
            <person name="Otto E.A."/>
            <person name="Airik R."/>
            <person name="Kispert A."/>
            <person name="Kelley G.G."/>
            <person name="Smrcka A.V."/>
            <person name="Gudermann T."/>
            <person name="Holzman L.B."/>
            <person name="Nuernberg P."/>
            <person name="Hildebrandt F."/>
        </authorList>
    </citation>
    <scope>INTERACTION WITH IQGAP1</scope>
</reference>
<reference key="12">
    <citation type="journal article" date="2010" name="Cell">
        <title>A tissue-specific atlas of mouse protein phosphorylation and expression.</title>
        <authorList>
            <person name="Huttlin E.L."/>
            <person name="Jedrychowski M.P."/>
            <person name="Elias J.E."/>
            <person name="Goswami T."/>
            <person name="Rad R."/>
            <person name="Beausoleil S.A."/>
            <person name="Villen J."/>
            <person name="Haas W."/>
            <person name="Sowa M.E."/>
            <person name="Gygi S.P."/>
        </authorList>
    </citation>
    <scope>PHOSPHORYLATION [LARGE SCALE ANALYSIS] AT SER-1093</scope>
    <scope>IDENTIFICATION BY MASS SPECTROMETRY [LARGE SCALE ANALYSIS]</scope>
    <source>
        <tissue>Brain</tissue>
        <tissue>Heart</tissue>
        <tissue>Kidney</tissue>
        <tissue>Lung</tissue>
        <tissue>Spleen</tissue>
    </source>
</reference>